<dbReference type="EC" id="3.6.5.-" evidence="2"/>
<dbReference type="EMBL" id="M84698">
    <property type="protein sequence ID" value="AAA32891.1"/>
    <property type="molecule type" value="Genomic_DNA"/>
</dbReference>
<dbReference type="EMBL" id="AF296838">
    <property type="status" value="NOT_ANNOTATED_CDS"/>
    <property type="molecule type" value="Genomic_DNA"/>
</dbReference>
<dbReference type="EMBL" id="CP002688">
    <property type="protein sequence ID" value="AED92748.1"/>
    <property type="molecule type" value="Genomic_DNA"/>
</dbReference>
<dbReference type="EMBL" id="AY040012">
    <property type="protein sequence ID" value="AAK64169.1"/>
    <property type="molecule type" value="mRNA"/>
</dbReference>
<dbReference type="EMBL" id="AY079366">
    <property type="protein sequence ID" value="AAL85097.1"/>
    <property type="molecule type" value="mRNA"/>
</dbReference>
<dbReference type="EMBL" id="AK317604">
    <property type="protein sequence ID" value="BAH20267.1"/>
    <property type="molecule type" value="mRNA"/>
</dbReference>
<dbReference type="PIR" id="A32712">
    <property type="entry name" value="A32712"/>
</dbReference>
<dbReference type="RefSeq" id="NP_197479.1">
    <property type="nucleotide sequence ID" value="NM_121983.4"/>
</dbReference>
<dbReference type="SMR" id="B9DHQ0"/>
<dbReference type="BioGRID" id="17373">
    <property type="interactions" value="1"/>
</dbReference>
<dbReference type="BioGRID" id="17374">
    <property type="interactions" value="3"/>
</dbReference>
<dbReference type="FunCoup" id="B9DHQ0">
    <property type="interactions" value="1972"/>
</dbReference>
<dbReference type="STRING" id="3702.B9DHQ0"/>
<dbReference type="iPTMnet" id="B9DHQ0"/>
<dbReference type="EnsemblPlants" id="AT5G19770.1">
    <property type="protein sequence ID" value="AT5G19770.1"/>
    <property type="gene ID" value="AT5G19770"/>
</dbReference>
<dbReference type="EnsemblPlants" id="AT5G19780.1">
    <property type="protein sequence ID" value="AT5G19780.1"/>
    <property type="gene ID" value="AT5G19780"/>
</dbReference>
<dbReference type="GeneID" id="832098"/>
<dbReference type="Gramene" id="AT5G19770.1">
    <property type="protein sequence ID" value="AT5G19770.1"/>
    <property type="gene ID" value="AT5G19770"/>
</dbReference>
<dbReference type="Gramene" id="AT5G19780.1">
    <property type="protein sequence ID" value="AT5G19780.1"/>
    <property type="gene ID" value="AT5G19780"/>
</dbReference>
<dbReference type="KEGG" id="ath:AT5G19770"/>
<dbReference type="KEGG" id="ath:AT5G19780"/>
<dbReference type="Araport" id="AT5G19780"/>
<dbReference type="TAIR" id="AT5G19780">
    <property type="gene designation" value="TUA5"/>
</dbReference>
<dbReference type="HOGENOM" id="CLU_015718_0_0_1"/>
<dbReference type="InParanoid" id="B9DHQ0"/>
<dbReference type="OMA" id="EVRCGAY"/>
<dbReference type="OrthoDB" id="1550216at2759"/>
<dbReference type="PhylomeDB" id="B9DHQ0"/>
<dbReference type="PRO" id="PR:B9DHQ0"/>
<dbReference type="Proteomes" id="UP000006548">
    <property type="component" value="Chromosome 5"/>
</dbReference>
<dbReference type="ExpressionAtlas" id="B9DHQ0">
    <property type="expression patterns" value="baseline and differential"/>
</dbReference>
<dbReference type="GO" id="GO:0005737">
    <property type="term" value="C:cytoplasm"/>
    <property type="evidence" value="ECO:0007669"/>
    <property type="project" value="UniProtKB-KW"/>
</dbReference>
<dbReference type="GO" id="GO:0005874">
    <property type="term" value="C:microtubule"/>
    <property type="evidence" value="ECO:0007669"/>
    <property type="project" value="UniProtKB-KW"/>
</dbReference>
<dbReference type="GO" id="GO:0005525">
    <property type="term" value="F:GTP binding"/>
    <property type="evidence" value="ECO:0007669"/>
    <property type="project" value="UniProtKB-KW"/>
</dbReference>
<dbReference type="GO" id="GO:0016787">
    <property type="term" value="F:hydrolase activity"/>
    <property type="evidence" value="ECO:0007669"/>
    <property type="project" value="UniProtKB-KW"/>
</dbReference>
<dbReference type="GO" id="GO:0046872">
    <property type="term" value="F:metal ion binding"/>
    <property type="evidence" value="ECO:0007669"/>
    <property type="project" value="UniProtKB-KW"/>
</dbReference>
<dbReference type="GO" id="GO:0005200">
    <property type="term" value="F:structural constituent of cytoskeleton"/>
    <property type="evidence" value="ECO:0007669"/>
    <property type="project" value="InterPro"/>
</dbReference>
<dbReference type="GO" id="GO:0007017">
    <property type="term" value="P:microtubule-based process"/>
    <property type="evidence" value="ECO:0007669"/>
    <property type="project" value="InterPro"/>
</dbReference>
<dbReference type="CDD" id="cd02186">
    <property type="entry name" value="alpha_tubulin"/>
    <property type="match status" value="1"/>
</dbReference>
<dbReference type="FunFam" id="1.10.287.600:FF:000005">
    <property type="entry name" value="Tubulin alpha chain"/>
    <property type="match status" value="1"/>
</dbReference>
<dbReference type="FunFam" id="3.30.1330.20:FF:000001">
    <property type="entry name" value="Tubulin alpha chain"/>
    <property type="match status" value="1"/>
</dbReference>
<dbReference type="FunFam" id="3.40.50.1440:FF:000004">
    <property type="entry name" value="Tubulin alpha chain"/>
    <property type="match status" value="1"/>
</dbReference>
<dbReference type="Gene3D" id="1.10.287.600">
    <property type="entry name" value="Helix hairpin bin"/>
    <property type="match status" value="1"/>
</dbReference>
<dbReference type="Gene3D" id="3.30.1330.20">
    <property type="entry name" value="Tubulin/FtsZ, C-terminal domain"/>
    <property type="match status" value="1"/>
</dbReference>
<dbReference type="Gene3D" id="3.40.50.1440">
    <property type="entry name" value="Tubulin/FtsZ, GTPase domain"/>
    <property type="match status" value="1"/>
</dbReference>
<dbReference type="InterPro" id="IPR002452">
    <property type="entry name" value="Alpha_tubulin"/>
</dbReference>
<dbReference type="InterPro" id="IPR013838">
    <property type="entry name" value="Beta-tubulin_BS"/>
</dbReference>
<dbReference type="InterPro" id="IPR008280">
    <property type="entry name" value="Tub_FtsZ_C"/>
</dbReference>
<dbReference type="InterPro" id="IPR000217">
    <property type="entry name" value="Tubulin"/>
</dbReference>
<dbReference type="InterPro" id="IPR037103">
    <property type="entry name" value="Tubulin/FtsZ-like_C"/>
</dbReference>
<dbReference type="InterPro" id="IPR018316">
    <property type="entry name" value="Tubulin/FtsZ_2-layer-sand-dom"/>
</dbReference>
<dbReference type="InterPro" id="IPR036525">
    <property type="entry name" value="Tubulin/FtsZ_GTPase_sf"/>
</dbReference>
<dbReference type="InterPro" id="IPR023123">
    <property type="entry name" value="Tubulin_C"/>
</dbReference>
<dbReference type="InterPro" id="IPR017975">
    <property type="entry name" value="Tubulin_CS"/>
</dbReference>
<dbReference type="InterPro" id="IPR003008">
    <property type="entry name" value="Tubulin_FtsZ_GTPase"/>
</dbReference>
<dbReference type="PANTHER" id="PTHR11588">
    <property type="entry name" value="TUBULIN"/>
    <property type="match status" value="1"/>
</dbReference>
<dbReference type="Pfam" id="PF00091">
    <property type="entry name" value="Tubulin"/>
    <property type="match status" value="1"/>
</dbReference>
<dbReference type="Pfam" id="PF03953">
    <property type="entry name" value="Tubulin_C"/>
    <property type="match status" value="1"/>
</dbReference>
<dbReference type="PRINTS" id="PR01162">
    <property type="entry name" value="ALPHATUBULIN"/>
</dbReference>
<dbReference type="PRINTS" id="PR01161">
    <property type="entry name" value="TUBULIN"/>
</dbReference>
<dbReference type="SMART" id="SM00864">
    <property type="entry name" value="Tubulin"/>
    <property type="match status" value="1"/>
</dbReference>
<dbReference type="SMART" id="SM00865">
    <property type="entry name" value="Tubulin_C"/>
    <property type="match status" value="1"/>
</dbReference>
<dbReference type="SUPFAM" id="SSF55307">
    <property type="entry name" value="Tubulin C-terminal domain-like"/>
    <property type="match status" value="1"/>
</dbReference>
<dbReference type="SUPFAM" id="SSF52490">
    <property type="entry name" value="Tubulin nucleotide-binding domain-like"/>
    <property type="match status" value="1"/>
</dbReference>
<dbReference type="PROSITE" id="PS00227">
    <property type="entry name" value="TUBULIN"/>
    <property type="match status" value="1"/>
</dbReference>
<protein>
    <recommendedName>
        <fullName>Tubulin alpha-5 chain</fullName>
        <ecNumber evidence="2">3.6.5.-</ecNumber>
    </recommendedName>
</protein>
<accession>B9DHQ0</accession>
<accession>P20363</accession>
<proteinExistence type="evidence at protein level"/>
<keyword id="KW-0963">Cytoplasm</keyword>
<keyword id="KW-0206">Cytoskeleton</keyword>
<keyword id="KW-0342">GTP-binding</keyword>
<keyword id="KW-0378">Hydrolase</keyword>
<keyword id="KW-0460">Magnesium</keyword>
<keyword id="KW-0479">Metal-binding</keyword>
<keyword id="KW-0493">Microtubule</keyword>
<keyword id="KW-0547">Nucleotide-binding</keyword>
<keyword id="KW-0597">Phosphoprotein</keyword>
<keyword id="KW-1185">Reference proteome</keyword>
<feature type="chain" id="PRO_0000419522" description="Tubulin alpha-5 chain">
    <location>
        <begin position="1"/>
        <end position="450"/>
    </location>
</feature>
<feature type="region of interest" description="Disordered" evidence="3">
    <location>
        <begin position="429"/>
        <end position="450"/>
    </location>
</feature>
<feature type="compositionally biased region" description="Acidic residues" evidence="3">
    <location>
        <begin position="431"/>
        <end position="450"/>
    </location>
</feature>
<feature type="active site" evidence="2">
    <location>
        <position position="254"/>
    </location>
</feature>
<feature type="binding site" evidence="2">
    <location>
        <position position="11"/>
    </location>
    <ligand>
        <name>GTP</name>
        <dbReference type="ChEBI" id="CHEBI:37565"/>
    </ligand>
</feature>
<feature type="binding site" evidence="2">
    <location>
        <position position="71"/>
    </location>
    <ligand>
        <name>GTP</name>
        <dbReference type="ChEBI" id="CHEBI:37565"/>
    </ligand>
</feature>
<feature type="binding site" evidence="2">
    <location>
        <position position="71"/>
    </location>
    <ligand>
        <name>Mg(2+)</name>
        <dbReference type="ChEBI" id="CHEBI:18420"/>
    </ligand>
</feature>
<feature type="binding site" evidence="2">
    <location>
        <position position="144"/>
    </location>
    <ligand>
        <name>GTP</name>
        <dbReference type="ChEBI" id="CHEBI:37565"/>
    </ligand>
</feature>
<feature type="binding site" evidence="2">
    <location>
        <position position="145"/>
    </location>
    <ligand>
        <name>GTP</name>
        <dbReference type="ChEBI" id="CHEBI:37565"/>
    </ligand>
</feature>
<feature type="binding site" evidence="2">
    <location>
        <position position="179"/>
    </location>
    <ligand>
        <name>GTP</name>
        <dbReference type="ChEBI" id="CHEBI:37565"/>
    </ligand>
</feature>
<feature type="binding site" evidence="2">
    <location>
        <position position="206"/>
    </location>
    <ligand>
        <name>GTP</name>
        <dbReference type="ChEBI" id="CHEBI:37565"/>
    </ligand>
</feature>
<feature type="binding site" evidence="2">
    <location>
        <position position="228"/>
    </location>
    <ligand>
        <name>GTP</name>
        <dbReference type="ChEBI" id="CHEBI:37565"/>
    </ligand>
</feature>
<feature type="site" description="Involved in polymerization">
    <location>
        <position position="450"/>
    </location>
</feature>
<feature type="modified residue" description="Phosphothreonine" evidence="5">
    <location>
        <position position="349"/>
    </location>
</feature>
<feature type="sequence conflict" description="In Ref. 5; BAH20267." evidence="4" ref="5">
    <original>E</original>
    <variation>G</variation>
    <location>
        <position position="220"/>
    </location>
</feature>
<reference key="1">
    <citation type="journal article" date="1992" name="Plant Cell">
        <title>The small genome of Arabidopsis contains at least six expressed alpha-tubulin genes.</title>
        <authorList>
            <person name="Kopczak S.D."/>
            <person name="Haas N.A."/>
            <person name="Hussey P.J."/>
            <person name="Silflow C.D."/>
            <person name="Snustad D.P."/>
        </authorList>
    </citation>
    <scope>NUCLEOTIDE SEQUENCE [GENOMIC DNA]</scope>
    <source>
        <strain>cv. Columbia</strain>
    </source>
</reference>
<reference key="2">
    <citation type="journal article" date="2000" name="Nature">
        <title>Sequence and analysis of chromosome 5 of the plant Arabidopsis thaliana.</title>
        <authorList>
            <person name="Tabata S."/>
            <person name="Kaneko T."/>
            <person name="Nakamura Y."/>
            <person name="Kotani H."/>
            <person name="Kato T."/>
            <person name="Asamizu E."/>
            <person name="Miyajima N."/>
            <person name="Sasamoto S."/>
            <person name="Kimura T."/>
            <person name="Hosouchi T."/>
            <person name="Kawashima K."/>
            <person name="Kohara M."/>
            <person name="Matsumoto M."/>
            <person name="Matsuno A."/>
            <person name="Muraki A."/>
            <person name="Nakayama S."/>
            <person name="Nakazaki N."/>
            <person name="Naruo K."/>
            <person name="Okumura S."/>
            <person name="Shinpo S."/>
            <person name="Takeuchi C."/>
            <person name="Wada T."/>
            <person name="Watanabe A."/>
            <person name="Yamada M."/>
            <person name="Yasuda M."/>
            <person name="Sato S."/>
            <person name="de la Bastide M."/>
            <person name="Huang E."/>
            <person name="Spiegel L."/>
            <person name="Gnoj L."/>
            <person name="O'Shaughnessy A."/>
            <person name="Preston R."/>
            <person name="Habermann K."/>
            <person name="Murray J."/>
            <person name="Johnson D."/>
            <person name="Rohlfing T."/>
            <person name="Nelson J."/>
            <person name="Stoneking T."/>
            <person name="Pepin K."/>
            <person name="Spieth J."/>
            <person name="Sekhon M."/>
            <person name="Armstrong J."/>
            <person name="Becker M."/>
            <person name="Belter E."/>
            <person name="Cordum H."/>
            <person name="Cordes M."/>
            <person name="Courtney L."/>
            <person name="Courtney W."/>
            <person name="Dante M."/>
            <person name="Du H."/>
            <person name="Edwards J."/>
            <person name="Fryman J."/>
            <person name="Haakensen B."/>
            <person name="Lamar E."/>
            <person name="Latreille P."/>
            <person name="Leonard S."/>
            <person name="Meyer R."/>
            <person name="Mulvaney E."/>
            <person name="Ozersky P."/>
            <person name="Riley A."/>
            <person name="Strowmatt C."/>
            <person name="Wagner-McPherson C."/>
            <person name="Wollam A."/>
            <person name="Yoakum M."/>
            <person name="Bell M."/>
            <person name="Dedhia N."/>
            <person name="Parnell L."/>
            <person name="Shah R."/>
            <person name="Rodriguez M."/>
            <person name="Hoon See L."/>
            <person name="Vil D."/>
            <person name="Baker J."/>
            <person name="Kirchoff K."/>
            <person name="Toth K."/>
            <person name="King L."/>
            <person name="Bahret A."/>
            <person name="Miller B."/>
            <person name="Marra M.A."/>
            <person name="Martienssen R."/>
            <person name="McCombie W.R."/>
            <person name="Wilson R.K."/>
            <person name="Murphy G."/>
            <person name="Bancroft I."/>
            <person name="Volckaert G."/>
            <person name="Wambutt R."/>
            <person name="Duesterhoeft A."/>
            <person name="Stiekema W."/>
            <person name="Pohl T."/>
            <person name="Entian K.-D."/>
            <person name="Terryn N."/>
            <person name="Hartley N."/>
            <person name="Bent E."/>
            <person name="Johnson S."/>
            <person name="Langham S.-A."/>
            <person name="McCullagh B."/>
            <person name="Robben J."/>
            <person name="Grymonprez B."/>
            <person name="Zimmermann W."/>
            <person name="Ramsperger U."/>
            <person name="Wedler H."/>
            <person name="Balke K."/>
            <person name="Wedler E."/>
            <person name="Peters S."/>
            <person name="van Staveren M."/>
            <person name="Dirkse W."/>
            <person name="Mooijman P."/>
            <person name="Klein Lankhorst R."/>
            <person name="Weitzenegger T."/>
            <person name="Bothe G."/>
            <person name="Rose M."/>
            <person name="Hauf J."/>
            <person name="Berneiser S."/>
            <person name="Hempel S."/>
            <person name="Feldpausch M."/>
            <person name="Lamberth S."/>
            <person name="Villarroel R."/>
            <person name="Gielen J."/>
            <person name="Ardiles W."/>
            <person name="Bents O."/>
            <person name="Lemcke K."/>
            <person name="Kolesov G."/>
            <person name="Mayer K.F.X."/>
            <person name="Rudd S."/>
            <person name="Schoof H."/>
            <person name="Schueller C."/>
            <person name="Zaccaria P."/>
            <person name="Mewes H.-W."/>
            <person name="Bevan M."/>
            <person name="Fransz P.F."/>
        </authorList>
    </citation>
    <scope>NUCLEOTIDE SEQUENCE [LARGE SCALE GENOMIC DNA]</scope>
    <source>
        <strain>cv. Columbia</strain>
    </source>
</reference>
<reference key="3">
    <citation type="journal article" date="2017" name="Plant J.">
        <title>Araport11: a complete reannotation of the Arabidopsis thaliana reference genome.</title>
        <authorList>
            <person name="Cheng C.Y."/>
            <person name="Krishnakumar V."/>
            <person name="Chan A.P."/>
            <person name="Thibaud-Nissen F."/>
            <person name="Schobel S."/>
            <person name="Town C.D."/>
        </authorList>
    </citation>
    <scope>GENOME REANNOTATION</scope>
    <source>
        <strain>cv. Columbia</strain>
    </source>
</reference>
<reference key="4">
    <citation type="journal article" date="2003" name="Science">
        <title>Empirical analysis of transcriptional activity in the Arabidopsis genome.</title>
        <authorList>
            <person name="Yamada K."/>
            <person name="Lim J."/>
            <person name="Dale J.M."/>
            <person name="Chen H."/>
            <person name="Shinn P."/>
            <person name="Palm C.J."/>
            <person name="Southwick A.M."/>
            <person name="Wu H.C."/>
            <person name="Kim C.J."/>
            <person name="Nguyen M."/>
            <person name="Pham P.K."/>
            <person name="Cheuk R.F."/>
            <person name="Karlin-Newmann G."/>
            <person name="Liu S.X."/>
            <person name="Lam B."/>
            <person name="Sakano H."/>
            <person name="Wu T."/>
            <person name="Yu G."/>
            <person name="Miranda M."/>
            <person name="Quach H.L."/>
            <person name="Tripp M."/>
            <person name="Chang C.H."/>
            <person name="Lee J.M."/>
            <person name="Toriumi M.J."/>
            <person name="Chan M.M."/>
            <person name="Tang C.C."/>
            <person name="Onodera C.S."/>
            <person name="Deng J.M."/>
            <person name="Akiyama K."/>
            <person name="Ansari Y."/>
            <person name="Arakawa T."/>
            <person name="Banh J."/>
            <person name="Banno F."/>
            <person name="Bowser L."/>
            <person name="Brooks S.Y."/>
            <person name="Carninci P."/>
            <person name="Chao Q."/>
            <person name="Choy N."/>
            <person name="Enju A."/>
            <person name="Goldsmith A.D."/>
            <person name="Gurjal M."/>
            <person name="Hansen N.F."/>
            <person name="Hayashizaki Y."/>
            <person name="Johnson-Hopson C."/>
            <person name="Hsuan V.W."/>
            <person name="Iida K."/>
            <person name="Karnes M."/>
            <person name="Khan S."/>
            <person name="Koesema E."/>
            <person name="Ishida J."/>
            <person name="Jiang P.X."/>
            <person name="Jones T."/>
            <person name="Kawai J."/>
            <person name="Kamiya A."/>
            <person name="Meyers C."/>
            <person name="Nakajima M."/>
            <person name="Narusaka M."/>
            <person name="Seki M."/>
            <person name="Sakurai T."/>
            <person name="Satou M."/>
            <person name="Tamse R."/>
            <person name="Vaysberg M."/>
            <person name="Wallender E.K."/>
            <person name="Wong C."/>
            <person name="Yamamura Y."/>
            <person name="Yuan S."/>
            <person name="Shinozaki K."/>
            <person name="Davis R.W."/>
            <person name="Theologis A."/>
            <person name="Ecker J.R."/>
        </authorList>
    </citation>
    <scope>NUCLEOTIDE SEQUENCE [LARGE SCALE MRNA]</scope>
    <source>
        <strain>cv. Columbia</strain>
    </source>
</reference>
<reference key="5">
    <citation type="journal article" date="2009" name="DNA Res.">
        <title>Analysis of multiple occurrences of alternative splicing events in Arabidopsis thaliana using novel sequenced full-length cDNAs.</title>
        <authorList>
            <person name="Iida K."/>
            <person name="Fukami-Kobayashi K."/>
            <person name="Toyoda A."/>
            <person name="Sakaki Y."/>
            <person name="Kobayashi M."/>
            <person name="Seki M."/>
            <person name="Shinozaki K."/>
        </authorList>
    </citation>
    <scope>NUCLEOTIDE SEQUENCE [LARGE SCALE MRNA] OF 167-450</scope>
    <source>
        <strain>cv. Columbia</strain>
    </source>
</reference>
<reference key="6">
    <citation type="journal article" date="2008" name="J. Proteome Res.">
        <title>Site-specific phosphorylation profiling of Arabidopsis proteins by mass spectrometry and peptide chip analysis.</title>
        <authorList>
            <person name="de la Fuente van Bentem S."/>
            <person name="Anrather D."/>
            <person name="Dohnal I."/>
            <person name="Roitinger E."/>
            <person name="Csaszar E."/>
            <person name="Joore J."/>
            <person name="Buijnink J."/>
            <person name="Carreri A."/>
            <person name="Forzani C."/>
            <person name="Lorkovic Z.J."/>
            <person name="Barta A."/>
            <person name="Lecourieux D."/>
            <person name="Verhounig A."/>
            <person name="Jonak C."/>
            <person name="Hirt H."/>
        </authorList>
    </citation>
    <scope>IDENTIFICATION BY MASS SPECTROMETRY [LARGE SCALE ANALYSIS]</scope>
    <source>
        <tissue>Root</tissue>
    </source>
</reference>
<reference key="7">
    <citation type="journal article" date="2009" name="J. Proteomics">
        <title>Phosphoproteomic analysis of nuclei-enriched fractions from Arabidopsis thaliana.</title>
        <authorList>
            <person name="Jones A.M.E."/>
            <person name="MacLean D."/>
            <person name="Studholme D.J."/>
            <person name="Serna-Sanz A."/>
            <person name="Andreasson E."/>
            <person name="Rathjen J.P."/>
            <person name="Peck S.C."/>
        </authorList>
    </citation>
    <scope>IDENTIFICATION BY MASS SPECTROMETRY [LARGE SCALE ANALYSIS]</scope>
    <source>
        <strain>cv. Columbia</strain>
    </source>
</reference>
<reference key="8">
    <citation type="journal article" date="2009" name="Plant Physiol.">
        <title>Large-scale Arabidopsis phosphoproteome profiling reveals novel chloroplast kinase substrates and phosphorylation networks.</title>
        <authorList>
            <person name="Reiland S."/>
            <person name="Messerli G."/>
            <person name="Baerenfaller K."/>
            <person name="Gerrits B."/>
            <person name="Endler A."/>
            <person name="Grossmann J."/>
            <person name="Gruissem W."/>
            <person name="Baginsky S."/>
        </authorList>
    </citation>
    <scope>PHOSPHORYLATION [LARGE SCALE ANALYSIS] AT THR-349</scope>
    <scope>IDENTIFICATION BY MASS SPECTROMETRY [LARGE SCALE ANALYSIS]</scope>
</reference>
<comment type="function">
    <text>Tubulin is the major constituent of microtubules, a cylinder consisting of laterally associated linear protofilaments composed of alpha- and beta-tubulin heterodimers. Microtubules grow by the addition of GTP-tubulin dimers to the microtubule end, where a stabilizing cap forms. Below the cap, tubulin dimers are in GDP-bound state, owing to GTPase activity of alpha-tubulin.</text>
</comment>
<comment type="catalytic activity">
    <reaction evidence="2">
        <text>GTP + H2O = GDP + phosphate + H(+)</text>
        <dbReference type="Rhea" id="RHEA:19669"/>
        <dbReference type="ChEBI" id="CHEBI:15377"/>
        <dbReference type="ChEBI" id="CHEBI:15378"/>
        <dbReference type="ChEBI" id="CHEBI:37565"/>
        <dbReference type="ChEBI" id="CHEBI:43474"/>
        <dbReference type="ChEBI" id="CHEBI:58189"/>
    </reaction>
    <physiologicalReaction direction="left-to-right" evidence="2">
        <dbReference type="Rhea" id="RHEA:19670"/>
    </physiologicalReaction>
</comment>
<comment type="cofactor">
    <cofactor evidence="2">
        <name>Mg(2+)</name>
        <dbReference type="ChEBI" id="CHEBI:18420"/>
    </cofactor>
</comment>
<comment type="subunit">
    <text>Dimer of alpha and beta chains. A typical microtubule is a hollow water-filled tube with an outer diameter of 25 nm and an inner diameter of 15 nM. Alpha-beta heterodimers associate head-to-tail to form protofilaments running lengthwise along the microtubule wall with the beta-tubulin subunit facing the microtubule plus end conferring a structural polarity. Microtubules usually have 13 protofilaments but different protofilament numbers can be found in some organisms and specialized cells.</text>
</comment>
<comment type="subcellular location">
    <subcellularLocation>
        <location>Cytoplasm</location>
        <location>Cytoskeleton</location>
    </subcellularLocation>
</comment>
<comment type="PTM">
    <text evidence="1">Undergoes a tyrosination/detyrosination cycle, the cyclic removal and re-addition of a C-terminal tyrosine residue by the enzymes tubulin tyrosine carboxypeptidase (TTCP) and tubulin tyrosine ligase (TTL), respectively.</text>
</comment>
<comment type="miscellaneous">
    <text>There are six genes coding for alpha-tubulin. The sequences coded by genes 3 and 5 are identical.</text>
</comment>
<comment type="similarity">
    <text evidence="4">Belongs to the tubulin family.</text>
</comment>
<evidence type="ECO:0000250" key="1"/>
<evidence type="ECO:0000250" key="2">
    <source>
        <dbReference type="UniProtKB" id="P68363"/>
    </source>
</evidence>
<evidence type="ECO:0000256" key="3">
    <source>
        <dbReference type="SAM" id="MobiDB-lite"/>
    </source>
</evidence>
<evidence type="ECO:0000305" key="4"/>
<evidence type="ECO:0007744" key="5">
    <source>
    </source>
</evidence>
<name>TBA5_ARATH</name>
<sequence>MREIISIHIGQAGIQVGNSCWELYCLEHGIQPDGMMPSDTTVGVAHDAFNTFFSETGAGKHVPRAVFVDLEPTVIDEVRTGTYRQLFHPEQLISGKEDAANNFARGHYTVGKEIVDLCLDRVRKLADNCTGLQGFLVFNAVGGGTGSGLGSLLLERLSVDYGKKSKLGFTIYPSPQVSTAVVEPYNSVLSTHSLLEHTDVAVLLDNEAIYDICRRSLDIERPTYTNLNRLISQIISSLTTSLRFDGAINVDITEFQTNLVPYPRIHFMLSSYAPVISAAKAYHEQLSVPEITNAVFEPASMMAKCDPRHGKYMACCLMYRGDVVPKDVNAAVGTIKTKRTVQFVDWCPTGFKCGINYQPPTVVPGGDLAKVQRAVCMISNNTAVAEVFSRIDHKFDLMYAKRAFVHWYVGEGMEEGEFSEAREDLAALEKDYEEVGAEGGDDEEDEGEDY</sequence>
<gene>
    <name type="primary">TUBA5</name>
    <name type="synonym">TUA5</name>
    <name type="ordered locus">At5g19780</name>
    <name type="ORF">T29J13.200</name>
</gene>
<organism>
    <name type="scientific">Arabidopsis thaliana</name>
    <name type="common">Mouse-ear cress</name>
    <dbReference type="NCBI Taxonomy" id="3702"/>
    <lineage>
        <taxon>Eukaryota</taxon>
        <taxon>Viridiplantae</taxon>
        <taxon>Streptophyta</taxon>
        <taxon>Embryophyta</taxon>
        <taxon>Tracheophyta</taxon>
        <taxon>Spermatophyta</taxon>
        <taxon>Magnoliopsida</taxon>
        <taxon>eudicotyledons</taxon>
        <taxon>Gunneridae</taxon>
        <taxon>Pentapetalae</taxon>
        <taxon>rosids</taxon>
        <taxon>malvids</taxon>
        <taxon>Brassicales</taxon>
        <taxon>Brassicaceae</taxon>
        <taxon>Camelineae</taxon>
        <taxon>Arabidopsis</taxon>
    </lineage>
</organism>